<protein>
    <recommendedName>
        <fullName evidence="1">Apolipoprotein N-acyltransferase</fullName>
        <shortName evidence="1">ALP N-acyltransferase</shortName>
        <ecNumber evidence="1">2.3.1.269</ecNumber>
    </recommendedName>
</protein>
<feature type="chain" id="PRO_0000178055" description="Apolipoprotein N-acyltransferase">
    <location>
        <begin position="1"/>
        <end position="541"/>
    </location>
</feature>
<feature type="transmembrane region" description="Helical" evidence="1">
    <location>
        <begin position="21"/>
        <end position="41"/>
    </location>
</feature>
<feature type="transmembrane region" description="Helical" evidence="1">
    <location>
        <begin position="54"/>
        <end position="74"/>
    </location>
</feature>
<feature type="transmembrane region" description="Helical" evidence="1">
    <location>
        <begin position="89"/>
        <end position="109"/>
    </location>
</feature>
<feature type="transmembrane region" description="Helical" evidence="1">
    <location>
        <begin position="116"/>
        <end position="136"/>
    </location>
</feature>
<feature type="transmembrane region" description="Helical" evidence="1">
    <location>
        <begin position="157"/>
        <end position="177"/>
    </location>
</feature>
<feature type="transmembrane region" description="Helical" evidence="1">
    <location>
        <begin position="189"/>
        <end position="209"/>
    </location>
</feature>
<feature type="transmembrane region" description="Helical" evidence="1">
    <location>
        <begin position="506"/>
        <end position="526"/>
    </location>
</feature>
<feature type="domain" description="CN hydrolase" evidence="1">
    <location>
        <begin position="219"/>
        <end position="500"/>
    </location>
</feature>
<feature type="active site" description="Proton acceptor" evidence="1">
    <location>
        <position position="265"/>
    </location>
</feature>
<feature type="active site" evidence="1">
    <location>
        <position position="350"/>
    </location>
</feature>
<feature type="active site" description="Nucleophile" evidence="1">
    <location>
        <position position="405"/>
    </location>
</feature>
<reference key="1">
    <citation type="journal article" date="2003" name="Nucleic Acids Res.">
        <title>Genome sequence of Chlamydophila caviae (Chlamydia psittaci GPIC): examining the role of niche-specific genes in the evolution of the Chlamydiaceae.</title>
        <authorList>
            <person name="Read T.D."/>
            <person name="Myers G.S.A."/>
            <person name="Brunham R.C."/>
            <person name="Nelson W.C."/>
            <person name="Paulsen I.T."/>
            <person name="Heidelberg J.F."/>
            <person name="Holtzapple E.K."/>
            <person name="Khouri H.M."/>
            <person name="Federova N.B."/>
            <person name="Carty H.A."/>
            <person name="Umayam L.A."/>
            <person name="Haft D.H."/>
            <person name="Peterson J.D."/>
            <person name="Beanan M.J."/>
            <person name="White O."/>
            <person name="Salzberg S.L."/>
            <person name="Hsia R.-C."/>
            <person name="McClarty G."/>
            <person name="Rank R.G."/>
            <person name="Bavoil P.M."/>
            <person name="Fraser C.M."/>
        </authorList>
    </citation>
    <scope>NUCLEOTIDE SEQUENCE [LARGE SCALE GENOMIC DNA]</scope>
    <source>
        <strain>ATCC VR-813 / DSM 19441 / 03DC25 / GPIC</strain>
    </source>
</reference>
<comment type="function">
    <text evidence="1">Catalyzes the phospholipid dependent N-acylation of the N-terminal cysteine of apolipoprotein, the last step in lipoprotein maturation.</text>
</comment>
<comment type="catalytic activity">
    <reaction evidence="1">
        <text>N-terminal S-1,2-diacyl-sn-glyceryl-L-cysteinyl-[lipoprotein] + a glycerophospholipid = N-acyl-S-1,2-diacyl-sn-glyceryl-L-cysteinyl-[lipoprotein] + a 2-acyl-sn-glycero-3-phospholipid + H(+)</text>
        <dbReference type="Rhea" id="RHEA:48228"/>
        <dbReference type="Rhea" id="RHEA-COMP:14681"/>
        <dbReference type="Rhea" id="RHEA-COMP:14684"/>
        <dbReference type="ChEBI" id="CHEBI:15378"/>
        <dbReference type="ChEBI" id="CHEBI:136912"/>
        <dbReference type="ChEBI" id="CHEBI:140656"/>
        <dbReference type="ChEBI" id="CHEBI:140657"/>
        <dbReference type="ChEBI" id="CHEBI:140660"/>
        <dbReference type="EC" id="2.3.1.269"/>
    </reaction>
</comment>
<comment type="pathway">
    <text evidence="1">Protein modification; lipoprotein biosynthesis (N-acyl transfer).</text>
</comment>
<comment type="subcellular location">
    <subcellularLocation>
        <location evidence="1">Cell inner membrane</location>
        <topology evidence="1">Multi-pass membrane protein</topology>
    </subcellularLocation>
</comment>
<comment type="similarity">
    <text evidence="1">Belongs to the CN hydrolase family. Apolipoprotein N-acyltransferase subfamily.</text>
</comment>
<evidence type="ECO:0000255" key="1">
    <source>
        <dbReference type="HAMAP-Rule" id="MF_01148"/>
    </source>
</evidence>
<accession>Q824Q5</accession>
<sequence length="541" mass="61816">MFRILSFLCSWILIAFAQPDMSWFFSLLGSAVGYGLLWYSLEPQKSPKLSWRQLTSLLFLWSVTVYGVHFSWMLSDLYVGKFIYVVWGVLISLLALLFTAFSCLLFFIVRKKHTKILWCLPGLWVAVEMVRFYFLCSGMSLDYLGWPITANAYGRQFGGFFGWAGESFILVATGISFYQVLLRKCFSRYVWLGCLLFPYILGGVHYEYLKNTFSKEENLRVAVIQPASSMLLEGPWSGSPAMAWQRLVSLSSIVRKPVDLLIFPEVSVPFGRDRKVYPYDDSQVILSPLTHFKHQDELLANVDWMQALSNHFNCPILMGLERWEELDSKLHLYNSAECISQHGELIGYDKRILVPGGEYIPGGKIGWSVCKKYFPEYALSCQRIPGARSGVIEVENLPKMGVSICYEETFGMLLRNYKREGAKLLVNLTNDGWYPSSRLPQVHFYHGILRNQELGMPCVRSCHTGITVAADALGRVIKMLPYETRYRKASPGVLQVSLPMQNYPTLYAFWGDFPMIFLSLLSIGCIGCYFGYRLLAKKEKA</sequence>
<gene>
    <name evidence="1" type="primary">lnt</name>
    <name type="ordered locus">CCA_00087</name>
</gene>
<dbReference type="EC" id="2.3.1.269" evidence="1"/>
<dbReference type="EMBL" id="AE015925">
    <property type="protein sequence ID" value="AAP04839.1"/>
    <property type="molecule type" value="Genomic_DNA"/>
</dbReference>
<dbReference type="RefSeq" id="WP_011006060.1">
    <property type="nucleotide sequence ID" value="NC_003361.3"/>
</dbReference>
<dbReference type="SMR" id="Q824Q5"/>
<dbReference type="STRING" id="227941.CCA_00087"/>
<dbReference type="KEGG" id="cca:CCA_00087"/>
<dbReference type="eggNOG" id="COG0815">
    <property type="taxonomic scope" value="Bacteria"/>
</dbReference>
<dbReference type="HOGENOM" id="CLU_019563_1_2_0"/>
<dbReference type="OrthoDB" id="9804277at2"/>
<dbReference type="UniPathway" id="UPA00666"/>
<dbReference type="Proteomes" id="UP000002193">
    <property type="component" value="Chromosome"/>
</dbReference>
<dbReference type="GO" id="GO:0005886">
    <property type="term" value="C:plasma membrane"/>
    <property type="evidence" value="ECO:0007669"/>
    <property type="project" value="UniProtKB-SubCell"/>
</dbReference>
<dbReference type="GO" id="GO:0016410">
    <property type="term" value="F:N-acyltransferase activity"/>
    <property type="evidence" value="ECO:0007669"/>
    <property type="project" value="UniProtKB-UniRule"/>
</dbReference>
<dbReference type="GO" id="GO:0042158">
    <property type="term" value="P:lipoprotein biosynthetic process"/>
    <property type="evidence" value="ECO:0007669"/>
    <property type="project" value="UniProtKB-UniRule"/>
</dbReference>
<dbReference type="CDD" id="cd07571">
    <property type="entry name" value="ALP_N-acyl_transferase"/>
    <property type="match status" value="1"/>
</dbReference>
<dbReference type="Gene3D" id="3.60.110.10">
    <property type="entry name" value="Carbon-nitrogen hydrolase"/>
    <property type="match status" value="1"/>
</dbReference>
<dbReference type="HAMAP" id="MF_01148">
    <property type="entry name" value="Lnt"/>
    <property type="match status" value="1"/>
</dbReference>
<dbReference type="InterPro" id="IPR004563">
    <property type="entry name" value="Apolipo_AcylTrfase"/>
</dbReference>
<dbReference type="InterPro" id="IPR003010">
    <property type="entry name" value="C-N_Hydrolase"/>
</dbReference>
<dbReference type="InterPro" id="IPR036526">
    <property type="entry name" value="C-N_Hydrolase_sf"/>
</dbReference>
<dbReference type="InterPro" id="IPR045378">
    <property type="entry name" value="LNT_N"/>
</dbReference>
<dbReference type="NCBIfam" id="TIGR00546">
    <property type="entry name" value="lnt"/>
    <property type="match status" value="1"/>
</dbReference>
<dbReference type="PANTHER" id="PTHR38686">
    <property type="entry name" value="APOLIPOPROTEIN N-ACYLTRANSFERASE"/>
    <property type="match status" value="1"/>
</dbReference>
<dbReference type="PANTHER" id="PTHR38686:SF1">
    <property type="entry name" value="APOLIPOPROTEIN N-ACYLTRANSFERASE"/>
    <property type="match status" value="1"/>
</dbReference>
<dbReference type="Pfam" id="PF00795">
    <property type="entry name" value="CN_hydrolase"/>
    <property type="match status" value="1"/>
</dbReference>
<dbReference type="Pfam" id="PF20154">
    <property type="entry name" value="LNT_N"/>
    <property type="match status" value="1"/>
</dbReference>
<dbReference type="SUPFAM" id="SSF56317">
    <property type="entry name" value="Carbon-nitrogen hydrolase"/>
    <property type="match status" value="1"/>
</dbReference>
<dbReference type="PROSITE" id="PS50263">
    <property type="entry name" value="CN_HYDROLASE"/>
    <property type="match status" value="1"/>
</dbReference>
<organism>
    <name type="scientific">Chlamydia caviae (strain ATCC VR-813 / DSM 19441 / 03DC25 / GPIC)</name>
    <name type="common">Chlamydophila caviae</name>
    <dbReference type="NCBI Taxonomy" id="227941"/>
    <lineage>
        <taxon>Bacteria</taxon>
        <taxon>Pseudomonadati</taxon>
        <taxon>Chlamydiota</taxon>
        <taxon>Chlamydiia</taxon>
        <taxon>Chlamydiales</taxon>
        <taxon>Chlamydiaceae</taxon>
        <taxon>Chlamydia/Chlamydophila group</taxon>
        <taxon>Chlamydia</taxon>
    </lineage>
</organism>
<keyword id="KW-0012">Acyltransferase</keyword>
<keyword id="KW-0997">Cell inner membrane</keyword>
<keyword id="KW-1003">Cell membrane</keyword>
<keyword id="KW-0472">Membrane</keyword>
<keyword id="KW-0808">Transferase</keyword>
<keyword id="KW-0812">Transmembrane</keyword>
<keyword id="KW-1133">Transmembrane helix</keyword>
<proteinExistence type="inferred from homology"/>
<name>LNT_CHLCV</name>